<dbReference type="EC" id="5.3.1.14" evidence="1"/>
<dbReference type="EMBL" id="CP000970">
    <property type="protein sequence ID" value="ACB16079.1"/>
    <property type="molecule type" value="Genomic_DNA"/>
</dbReference>
<dbReference type="RefSeq" id="WP_000211494.1">
    <property type="nucleotide sequence ID" value="NC_010498.1"/>
</dbReference>
<dbReference type="SMR" id="B1LMU3"/>
<dbReference type="KEGG" id="ecm:EcSMS35_4294"/>
<dbReference type="HOGENOM" id="CLU_052790_0_0_6"/>
<dbReference type="UniPathway" id="UPA00541">
    <property type="reaction ID" value="UER00601"/>
</dbReference>
<dbReference type="Proteomes" id="UP000007011">
    <property type="component" value="Chromosome"/>
</dbReference>
<dbReference type="GO" id="GO:0005737">
    <property type="term" value="C:cytoplasm"/>
    <property type="evidence" value="ECO:0007669"/>
    <property type="project" value="UniProtKB-SubCell"/>
</dbReference>
<dbReference type="GO" id="GO:0008740">
    <property type="term" value="F:L-rhamnose isomerase activity"/>
    <property type="evidence" value="ECO:0007669"/>
    <property type="project" value="UniProtKB-UniRule"/>
</dbReference>
<dbReference type="GO" id="GO:0030145">
    <property type="term" value="F:manganese ion binding"/>
    <property type="evidence" value="ECO:0007669"/>
    <property type="project" value="UniProtKB-UniRule"/>
</dbReference>
<dbReference type="GO" id="GO:0019324">
    <property type="term" value="P:L-lyxose metabolic process"/>
    <property type="evidence" value="ECO:0007669"/>
    <property type="project" value="TreeGrafter"/>
</dbReference>
<dbReference type="GO" id="GO:0019301">
    <property type="term" value="P:rhamnose catabolic process"/>
    <property type="evidence" value="ECO:0007669"/>
    <property type="project" value="UniProtKB-UniRule"/>
</dbReference>
<dbReference type="FunFam" id="3.20.20.150:FF:000006">
    <property type="entry name" value="L-rhamnose isomerase"/>
    <property type="match status" value="1"/>
</dbReference>
<dbReference type="Gene3D" id="3.20.20.150">
    <property type="entry name" value="Divalent-metal-dependent TIM barrel enzymes"/>
    <property type="match status" value="1"/>
</dbReference>
<dbReference type="HAMAP" id="MF_00541">
    <property type="entry name" value="RhaA"/>
    <property type="match status" value="1"/>
</dbReference>
<dbReference type="InterPro" id="IPR050337">
    <property type="entry name" value="L-rhamnose_isomerase"/>
</dbReference>
<dbReference type="InterPro" id="IPR009308">
    <property type="entry name" value="Rhamnose_isomerase"/>
</dbReference>
<dbReference type="InterPro" id="IPR036237">
    <property type="entry name" value="Xyl_isomerase-like_sf"/>
</dbReference>
<dbReference type="NCBIfam" id="NF002203">
    <property type="entry name" value="PRK01076.1"/>
    <property type="match status" value="1"/>
</dbReference>
<dbReference type="NCBIfam" id="TIGR01748">
    <property type="entry name" value="rhaA"/>
    <property type="match status" value="1"/>
</dbReference>
<dbReference type="PANTHER" id="PTHR30268">
    <property type="entry name" value="L-RHAMNOSE ISOMERASE"/>
    <property type="match status" value="1"/>
</dbReference>
<dbReference type="PANTHER" id="PTHR30268:SF0">
    <property type="entry name" value="L-RHAMNOSE ISOMERASE"/>
    <property type="match status" value="1"/>
</dbReference>
<dbReference type="Pfam" id="PF06134">
    <property type="entry name" value="RhaA"/>
    <property type="match status" value="1"/>
</dbReference>
<dbReference type="SUPFAM" id="SSF51658">
    <property type="entry name" value="Xylose isomerase-like"/>
    <property type="match status" value="1"/>
</dbReference>
<feature type="chain" id="PRO_1000128883" description="L-rhamnose isomerase">
    <location>
        <begin position="1"/>
        <end position="419"/>
    </location>
</feature>
<feature type="binding site" evidence="1">
    <location>
        <position position="262"/>
    </location>
    <ligand>
        <name>Mn(2+)</name>
        <dbReference type="ChEBI" id="CHEBI:29035"/>
    </ligand>
</feature>
<feature type="binding site" evidence="1">
    <location>
        <position position="294"/>
    </location>
    <ligand>
        <name>Mn(2+)</name>
        <dbReference type="ChEBI" id="CHEBI:29035"/>
    </ligand>
</feature>
<feature type="binding site" evidence="1">
    <location>
        <position position="296"/>
    </location>
    <ligand>
        <name>Mn(2+)</name>
        <dbReference type="ChEBI" id="CHEBI:29035"/>
    </ligand>
</feature>
<proteinExistence type="inferred from homology"/>
<comment type="function">
    <text evidence="1">Catalyzes the interconversion of L-rhamnose and L-rhamnulose.</text>
</comment>
<comment type="catalytic activity">
    <reaction evidence="1">
        <text>L-rhamnopyranose = L-rhamnulose</text>
        <dbReference type="Rhea" id="RHEA:23160"/>
        <dbReference type="ChEBI" id="CHEBI:17897"/>
        <dbReference type="ChEBI" id="CHEBI:62346"/>
        <dbReference type="EC" id="5.3.1.14"/>
    </reaction>
</comment>
<comment type="cofactor">
    <cofactor evidence="1">
        <name>Mn(2+)</name>
        <dbReference type="ChEBI" id="CHEBI:29035"/>
    </cofactor>
    <text evidence="1">Binds 1 Mn(2+) ion per subunit.</text>
</comment>
<comment type="pathway">
    <text evidence="1">Carbohydrate degradation; L-rhamnose degradation; glycerone phosphate from L-rhamnose: step 1/3.</text>
</comment>
<comment type="subunit">
    <text evidence="1">Homotetramer.</text>
</comment>
<comment type="subcellular location">
    <subcellularLocation>
        <location evidence="1">Cytoplasm</location>
    </subcellularLocation>
</comment>
<comment type="similarity">
    <text evidence="1">Belongs to the rhamnose isomerase family.</text>
</comment>
<organism>
    <name type="scientific">Escherichia coli (strain SMS-3-5 / SECEC)</name>
    <dbReference type="NCBI Taxonomy" id="439855"/>
    <lineage>
        <taxon>Bacteria</taxon>
        <taxon>Pseudomonadati</taxon>
        <taxon>Pseudomonadota</taxon>
        <taxon>Gammaproteobacteria</taxon>
        <taxon>Enterobacterales</taxon>
        <taxon>Enterobacteriaceae</taxon>
        <taxon>Escherichia</taxon>
    </lineage>
</organism>
<gene>
    <name evidence="1" type="primary">rhaA</name>
    <name type="ordered locus">EcSMS35_4294</name>
</gene>
<name>RHAA_ECOSM</name>
<reference key="1">
    <citation type="journal article" date="2008" name="J. Bacteriol.">
        <title>Insights into the environmental resistance gene pool from the genome sequence of the multidrug-resistant environmental isolate Escherichia coli SMS-3-5.</title>
        <authorList>
            <person name="Fricke W.F."/>
            <person name="Wright M.S."/>
            <person name="Lindell A.H."/>
            <person name="Harkins D.M."/>
            <person name="Baker-Austin C."/>
            <person name="Ravel J."/>
            <person name="Stepanauskas R."/>
        </authorList>
    </citation>
    <scope>NUCLEOTIDE SEQUENCE [LARGE SCALE GENOMIC DNA]</scope>
    <source>
        <strain>SMS-3-5 / SECEC</strain>
    </source>
</reference>
<accession>B1LMU3</accession>
<keyword id="KW-0963">Cytoplasm</keyword>
<keyword id="KW-0413">Isomerase</keyword>
<keyword id="KW-0464">Manganese</keyword>
<keyword id="KW-0479">Metal-binding</keyword>
<keyword id="KW-0684">Rhamnose metabolism</keyword>
<evidence type="ECO:0000255" key="1">
    <source>
        <dbReference type="HAMAP-Rule" id="MF_00541"/>
    </source>
</evidence>
<protein>
    <recommendedName>
        <fullName evidence="1">L-rhamnose isomerase</fullName>
        <ecNumber evidence="1">5.3.1.14</ecNumber>
    </recommendedName>
</protein>
<sequence length="419" mass="47172">MTTQLEQAWELAKQRFAAVGIDVEEALRQLDRLPVSMHCWQGDDVSGFENPEGSLTGGIQATGNYPGKARNASELRADLEQAMRLIPGPKRLNLHAIYLESDTPVSRDQIKPEHFKNWVEWAKANQLGLDFNPSCFSHPLSADGFTLSHADDSIRQFWIDHCKASRRVSAYFGEQLGTPSVMNIWIPDGMKDITVDRLAPRQRLLAALDEVISEKLDPAHHIDAVESKLFGIGAESYTVGSNEFYMGYATSRQTALCLDAGHFHPTEVISDKISAAMLYVPQLLLHVSRPVRWDSDHVVLLDDETQAIASEIVRHDLFDRVHIGLDFFDASINRIAAWVIGTRNMKKALLRALLEPTTELRKLEAAGDYTARLALLEEQKSLPWQAVWEMYCQRHDTPVGSEWLESVRAYEKAILSQRG</sequence>